<protein>
    <recommendedName>
        <fullName evidence="3">Isoafricanol synthase</fullName>
        <ecNumber evidence="2">4.2.3.157</ecNumber>
    </recommendedName>
</protein>
<dbReference type="EC" id="4.2.3.157" evidence="2"/>
<dbReference type="EMBL" id="CP002994">
    <property type="protein sequence ID" value="AEM85259.1"/>
    <property type="molecule type" value="Genomic_DNA"/>
</dbReference>
<dbReference type="RefSeq" id="WP_014058745.1">
    <property type="nucleotide sequence ID" value="NC_015957.1"/>
</dbReference>
<dbReference type="SMR" id="G2P5T1"/>
<dbReference type="KEGG" id="svl:Strvi_5748"/>
<dbReference type="eggNOG" id="ENOG502Z881">
    <property type="taxonomic scope" value="Bacteria"/>
</dbReference>
<dbReference type="HOGENOM" id="CLU_042538_4_0_11"/>
<dbReference type="BRENDA" id="4.2.3.157">
    <property type="organism ID" value="15064"/>
</dbReference>
<dbReference type="Proteomes" id="UP000008703">
    <property type="component" value="Chromosome"/>
</dbReference>
<dbReference type="GO" id="GO:0046872">
    <property type="term" value="F:metal ion binding"/>
    <property type="evidence" value="ECO:0007669"/>
    <property type="project" value="UniProtKB-KW"/>
</dbReference>
<dbReference type="GO" id="GO:0010333">
    <property type="term" value="F:terpene synthase activity"/>
    <property type="evidence" value="ECO:0007669"/>
    <property type="project" value="InterPro"/>
</dbReference>
<dbReference type="Gene3D" id="1.10.600.10">
    <property type="entry name" value="Farnesyl Diphosphate Synthase"/>
    <property type="match status" value="1"/>
</dbReference>
<dbReference type="InterPro" id="IPR048128">
    <property type="entry name" value="Isoafr/prist_syn"/>
</dbReference>
<dbReference type="InterPro" id="IPR008949">
    <property type="entry name" value="Isoprenoid_synthase_dom_sf"/>
</dbReference>
<dbReference type="InterPro" id="IPR034686">
    <property type="entry name" value="Terpene_cyclase-like_2"/>
</dbReference>
<dbReference type="NCBIfam" id="NF041624">
    <property type="entry name" value="isoafr_syn"/>
    <property type="match status" value="1"/>
</dbReference>
<dbReference type="PANTHER" id="PTHR35201:SF4">
    <property type="entry name" value="BETA-PINACENE SYNTHASE-RELATED"/>
    <property type="match status" value="1"/>
</dbReference>
<dbReference type="PANTHER" id="PTHR35201">
    <property type="entry name" value="TERPENE SYNTHASE"/>
    <property type="match status" value="1"/>
</dbReference>
<dbReference type="Pfam" id="PF19086">
    <property type="entry name" value="Terpene_syn_C_2"/>
    <property type="match status" value="1"/>
</dbReference>
<dbReference type="SFLD" id="SFLDS00005">
    <property type="entry name" value="Isoprenoid_Synthase_Type_I"/>
    <property type="match status" value="1"/>
</dbReference>
<dbReference type="SFLD" id="SFLDG01020">
    <property type="entry name" value="Terpene_Cyclase_Like_2"/>
    <property type="match status" value="1"/>
</dbReference>
<dbReference type="SUPFAM" id="SSF48576">
    <property type="entry name" value="Terpenoid synthases"/>
    <property type="match status" value="1"/>
</dbReference>
<evidence type="ECO:0000250" key="1">
    <source>
        <dbReference type="UniProtKB" id="B5GMG2"/>
    </source>
</evidence>
<evidence type="ECO:0000269" key="2">
    <source>
    </source>
</evidence>
<evidence type="ECO:0000303" key="3">
    <source>
    </source>
</evidence>
<evidence type="ECO:0000305" key="4"/>
<evidence type="ECO:0000312" key="5">
    <source>
        <dbReference type="EMBL" id="AEM85259.1"/>
    </source>
</evidence>
<feature type="chain" id="PRO_0000449806" description="Isoafricanol synthase">
    <location>
        <begin position="1"/>
        <end position="384"/>
    </location>
</feature>
<feature type="binding site" evidence="1">
    <location>
        <position position="95"/>
    </location>
    <ligand>
        <name>Mg(2+)</name>
        <dbReference type="ChEBI" id="CHEBI:18420"/>
        <label>1</label>
    </ligand>
</feature>
<feature type="binding site" evidence="1">
    <location>
        <position position="95"/>
    </location>
    <ligand>
        <name>Mg(2+)</name>
        <dbReference type="ChEBI" id="CHEBI:18420"/>
        <label>2</label>
    </ligand>
</feature>
<feature type="binding site" evidence="1">
    <location>
        <position position="245"/>
    </location>
    <ligand>
        <name>Mg(2+)</name>
        <dbReference type="ChEBI" id="CHEBI:18420"/>
        <label>3</label>
    </ligand>
</feature>
<feature type="binding site" evidence="1">
    <location>
        <position position="249"/>
    </location>
    <ligand>
        <name>Mg(2+)</name>
        <dbReference type="ChEBI" id="CHEBI:18420"/>
        <label>3</label>
    </ligand>
</feature>
<feature type="binding site" evidence="1">
    <location>
        <position position="253"/>
    </location>
    <ligand>
        <name>Mg(2+)</name>
        <dbReference type="ChEBI" id="CHEBI:18420"/>
        <label>3</label>
    </ligand>
</feature>
<organism>
    <name type="scientific">Streptomyces violaceusniger (strain Tu 4113)</name>
    <dbReference type="NCBI Taxonomy" id="653045"/>
    <lineage>
        <taxon>Bacteria</taxon>
        <taxon>Bacillati</taxon>
        <taxon>Actinomycetota</taxon>
        <taxon>Actinomycetes</taxon>
        <taxon>Kitasatosporales</taxon>
        <taxon>Streptomycetaceae</taxon>
        <taxon>Streptomyces</taxon>
        <taxon>Streptomyces violaceusniger group</taxon>
    </lineage>
</organism>
<reference key="1">
    <citation type="submission" date="2011-08" db="EMBL/GenBank/DDBJ databases">
        <title>Complete sequence of chromosome of Streptomyces violaceusniger Tu 4113.</title>
        <authorList>
            <consortium name="US DOE Joint Genome Institute"/>
            <person name="Lucas S."/>
            <person name="Han J."/>
            <person name="Lapidus A."/>
            <person name="Cheng J.-F."/>
            <person name="Goodwin L."/>
            <person name="Pitluck S."/>
            <person name="Peters L."/>
            <person name="Ivanova N."/>
            <person name="Daligault H."/>
            <person name="Detter J.C."/>
            <person name="Han C."/>
            <person name="Tapia R."/>
            <person name="Land M."/>
            <person name="Hauser L."/>
            <person name="Kyrpides N."/>
            <person name="Ivanova N."/>
            <person name="Pagani I."/>
            <person name="Hagen A."/>
            <person name="Katz L."/>
            <person name="Fiedler H.-P."/>
            <person name="Keasling J."/>
            <person name="Fortman J."/>
            <person name="Woyke T."/>
        </authorList>
    </citation>
    <scope>NUCLEOTIDE SEQUENCE [LARGE SCALE GENOMIC DNA]</scope>
    <source>
        <strain>Tu 4133</strain>
    </source>
</reference>
<reference key="2">
    <citation type="journal article" date="2014" name="Chem. Commun. (Camb.)">
        <title>Identification of isoafricanol and its terpene cyclase in Streptomyces violaceusniger using CLSA-NMR.</title>
        <authorList>
            <person name="Riclea R."/>
            <person name="Citron C.A."/>
            <person name="Rinkel J."/>
            <person name="Dickschat J.S."/>
        </authorList>
    </citation>
    <scope>FUNCTION</scope>
    <scope>CATALYTIC ACTIVITY</scope>
</reference>
<sequence length="384" mass="42360">MHAHASRPQARQTTLLRRAALFDFPASADLSPGTEAARHHTIQWLSRFGVFEGHESVAEYDALRFDVLAGLFYPRATGADLNLGSDLVGWYFVFDDQFDGELGSRPEAVARLVADVIRITEEDTAHGRAQDGEGPLLESFRDLWRRISSGRPQVWRDRFRHHWLEYLHSYHREALERTGALPGAGGDAPRSVEAVLALRRHSIGVQPCLDLNEPFGGYTLPPALHGGFPMARMREATDDVVVFTNDIASLDKELAVGDVHNSVIVQWERAGGELEDAVRHIADLANARYRWFEETAARLPALLTEAGADPGTHHAVGRYVDGMRHVMTGNLGWSVRTARYDERGTEAVSGGRQRPWAQLTGAEELIRAGRGAPLPPLGSGSGSR</sequence>
<name>IAFRS_STRV4</name>
<gene>
    <name evidence="5" type="ORF">Strvi_5748</name>
</gene>
<accession>G2P5T1</accession>
<keyword id="KW-0456">Lyase</keyword>
<keyword id="KW-0460">Magnesium</keyword>
<keyword id="KW-0479">Metal-binding</keyword>
<comment type="function">
    <text evidence="2">Catalyzes the cyclization of farnesyl diphosphate (FPP) to isoafricanol.</text>
</comment>
<comment type="catalytic activity">
    <reaction evidence="2">
        <text>(2E,6E)-farnesyl diphosphate + H2O = (+)-isoafricanol + diphosphate</text>
        <dbReference type="Rhea" id="RHEA:53616"/>
        <dbReference type="ChEBI" id="CHEBI:15377"/>
        <dbReference type="ChEBI" id="CHEBI:33019"/>
        <dbReference type="ChEBI" id="CHEBI:137522"/>
        <dbReference type="ChEBI" id="CHEBI:175763"/>
        <dbReference type="EC" id="4.2.3.157"/>
    </reaction>
</comment>
<comment type="cofactor">
    <cofactor evidence="1">
        <name>Mg(2+)</name>
        <dbReference type="ChEBI" id="CHEBI:18420"/>
    </cofactor>
    <text evidence="1">Binds 3 Mg(2+) ions per subunit.</text>
</comment>
<comment type="similarity">
    <text evidence="4">Belongs to the terpene synthase family.</text>
</comment>
<proteinExistence type="evidence at protein level"/>